<sequence length="340" mass="37401">MAVTMYYEEDVEVAALAGKKIAVIGYGSQGHAHAQNLRDSGHDVIIGVRQGKSFDRAKEDGFETFEVGEAVAKADVIMVLAPDELQQSIYEEDIKPNLKSGSALGFAHGFNIHFGYIEVPEDVDVFMVAPKAPGHLVRRTFTEGFGTPALFVSHQNATGHAREIAMDWAKGIGCARVGIIETTFKEETEEDLFGEQAVLCGGLTALVEAGFETLTEARYAGELAYFEVLHEMKLIVDLMYEGGFTKMRQSISNTAEFGDYVTGPRIITDEVKKNMKLVLADIQSGKFAQDFVDDFKAGRPKLTAYREAAKNLEIEKIGAELRKAMPFTQSGDDDAFKIYQ</sequence>
<reference key="1">
    <citation type="journal article" date="2006" name="Proc. Natl. Acad. Sci. U.S.A.">
        <title>Comparative genomics of the lactic acid bacteria.</title>
        <authorList>
            <person name="Makarova K.S."/>
            <person name="Slesarev A."/>
            <person name="Wolf Y.I."/>
            <person name="Sorokin A."/>
            <person name="Mirkin B."/>
            <person name="Koonin E.V."/>
            <person name="Pavlov A."/>
            <person name="Pavlova N."/>
            <person name="Karamychev V."/>
            <person name="Polouchine N."/>
            <person name="Shakhova V."/>
            <person name="Grigoriev I."/>
            <person name="Lou Y."/>
            <person name="Rohksar D."/>
            <person name="Lucas S."/>
            <person name="Huang K."/>
            <person name="Goodstein D.M."/>
            <person name="Hawkins T."/>
            <person name="Plengvidhya V."/>
            <person name="Welker D."/>
            <person name="Hughes J."/>
            <person name="Goh Y."/>
            <person name="Benson A."/>
            <person name="Baldwin K."/>
            <person name="Lee J.-H."/>
            <person name="Diaz-Muniz I."/>
            <person name="Dosti B."/>
            <person name="Smeianov V."/>
            <person name="Wechter W."/>
            <person name="Barabote R."/>
            <person name="Lorca G."/>
            <person name="Altermann E."/>
            <person name="Barrangou R."/>
            <person name="Ganesan B."/>
            <person name="Xie Y."/>
            <person name="Rawsthorne H."/>
            <person name="Tamir D."/>
            <person name="Parker C."/>
            <person name="Breidt F."/>
            <person name="Broadbent J.R."/>
            <person name="Hutkins R."/>
            <person name="O'Sullivan D."/>
            <person name="Steele J."/>
            <person name="Unlu G."/>
            <person name="Saier M.H. Jr."/>
            <person name="Klaenhammer T."/>
            <person name="Richardson P."/>
            <person name="Kozyavkin S."/>
            <person name="Weimer B.C."/>
            <person name="Mills D.A."/>
        </authorList>
    </citation>
    <scope>NUCLEOTIDE SEQUENCE [LARGE SCALE GENOMIC DNA]</scope>
    <source>
        <strain>SK11</strain>
    </source>
</reference>
<protein>
    <recommendedName>
        <fullName evidence="1">Ketol-acid reductoisomerase (NADP(+))</fullName>
        <shortName evidence="1">KARI</shortName>
        <ecNumber evidence="1">1.1.1.86</ecNumber>
    </recommendedName>
    <alternativeName>
        <fullName evidence="1">Acetohydroxy-acid isomeroreductase</fullName>
        <shortName evidence="1">AHIR</shortName>
    </alternativeName>
    <alternativeName>
        <fullName evidence="1">Alpha-keto-beta-hydroxylacyl reductoisomerase</fullName>
    </alternativeName>
    <alternativeName>
        <fullName evidence="1">Ketol-acid reductoisomerase type 1</fullName>
    </alternativeName>
    <alternativeName>
        <fullName evidence="1">Ketol-acid reductoisomerase type I</fullName>
    </alternativeName>
</protein>
<dbReference type="EC" id="1.1.1.86" evidence="1"/>
<dbReference type="EMBL" id="CP000425">
    <property type="protein sequence ID" value="ABJ72834.1"/>
    <property type="molecule type" value="Genomic_DNA"/>
</dbReference>
<dbReference type="RefSeq" id="WP_011676303.1">
    <property type="nucleotide sequence ID" value="NC_008527.1"/>
</dbReference>
<dbReference type="SMR" id="Q02YY8"/>
<dbReference type="KEGG" id="llc:LACR_1309"/>
<dbReference type="HOGENOM" id="CLU_033821_0_1_9"/>
<dbReference type="UniPathway" id="UPA00047">
    <property type="reaction ID" value="UER00056"/>
</dbReference>
<dbReference type="UniPathway" id="UPA00049">
    <property type="reaction ID" value="UER00060"/>
</dbReference>
<dbReference type="Proteomes" id="UP000000240">
    <property type="component" value="Chromosome"/>
</dbReference>
<dbReference type="GO" id="GO:0005829">
    <property type="term" value="C:cytosol"/>
    <property type="evidence" value="ECO:0007669"/>
    <property type="project" value="TreeGrafter"/>
</dbReference>
<dbReference type="GO" id="GO:0004455">
    <property type="term" value="F:ketol-acid reductoisomerase activity"/>
    <property type="evidence" value="ECO:0007669"/>
    <property type="project" value="UniProtKB-UniRule"/>
</dbReference>
<dbReference type="GO" id="GO:0000287">
    <property type="term" value="F:magnesium ion binding"/>
    <property type="evidence" value="ECO:0007669"/>
    <property type="project" value="UniProtKB-UniRule"/>
</dbReference>
<dbReference type="GO" id="GO:0050661">
    <property type="term" value="F:NADP binding"/>
    <property type="evidence" value="ECO:0007669"/>
    <property type="project" value="InterPro"/>
</dbReference>
<dbReference type="GO" id="GO:0009097">
    <property type="term" value="P:isoleucine biosynthetic process"/>
    <property type="evidence" value="ECO:0007669"/>
    <property type="project" value="UniProtKB-UniRule"/>
</dbReference>
<dbReference type="GO" id="GO:0009099">
    <property type="term" value="P:L-valine biosynthetic process"/>
    <property type="evidence" value="ECO:0007669"/>
    <property type="project" value="UniProtKB-UniRule"/>
</dbReference>
<dbReference type="FunFam" id="3.40.50.720:FF:000023">
    <property type="entry name" value="Ketol-acid reductoisomerase (NADP(+))"/>
    <property type="match status" value="1"/>
</dbReference>
<dbReference type="Gene3D" id="6.10.240.10">
    <property type="match status" value="1"/>
</dbReference>
<dbReference type="Gene3D" id="3.40.50.720">
    <property type="entry name" value="NAD(P)-binding Rossmann-like Domain"/>
    <property type="match status" value="1"/>
</dbReference>
<dbReference type="HAMAP" id="MF_00435">
    <property type="entry name" value="IlvC"/>
    <property type="match status" value="1"/>
</dbReference>
<dbReference type="InterPro" id="IPR008927">
    <property type="entry name" value="6-PGluconate_DH-like_C_sf"/>
</dbReference>
<dbReference type="InterPro" id="IPR013023">
    <property type="entry name" value="KARI"/>
</dbReference>
<dbReference type="InterPro" id="IPR000506">
    <property type="entry name" value="KARI_C"/>
</dbReference>
<dbReference type="InterPro" id="IPR013116">
    <property type="entry name" value="KARI_N"/>
</dbReference>
<dbReference type="InterPro" id="IPR014359">
    <property type="entry name" value="KARI_prok"/>
</dbReference>
<dbReference type="InterPro" id="IPR036291">
    <property type="entry name" value="NAD(P)-bd_dom_sf"/>
</dbReference>
<dbReference type="NCBIfam" id="TIGR00465">
    <property type="entry name" value="ilvC"/>
    <property type="match status" value="1"/>
</dbReference>
<dbReference type="NCBIfam" id="NF004017">
    <property type="entry name" value="PRK05479.1"/>
    <property type="match status" value="1"/>
</dbReference>
<dbReference type="NCBIfam" id="NF009940">
    <property type="entry name" value="PRK13403.1"/>
    <property type="match status" value="1"/>
</dbReference>
<dbReference type="PANTHER" id="PTHR21371">
    <property type="entry name" value="KETOL-ACID REDUCTOISOMERASE, MITOCHONDRIAL"/>
    <property type="match status" value="1"/>
</dbReference>
<dbReference type="PANTHER" id="PTHR21371:SF1">
    <property type="entry name" value="KETOL-ACID REDUCTOISOMERASE, MITOCHONDRIAL"/>
    <property type="match status" value="1"/>
</dbReference>
<dbReference type="Pfam" id="PF01450">
    <property type="entry name" value="KARI_C"/>
    <property type="match status" value="1"/>
</dbReference>
<dbReference type="Pfam" id="PF07991">
    <property type="entry name" value="KARI_N"/>
    <property type="match status" value="1"/>
</dbReference>
<dbReference type="PIRSF" id="PIRSF000116">
    <property type="entry name" value="IlvC_gammaproteo"/>
    <property type="match status" value="1"/>
</dbReference>
<dbReference type="SUPFAM" id="SSF48179">
    <property type="entry name" value="6-phosphogluconate dehydrogenase C-terminal domain-like"/>
    <property type="match status" value="1"/>
</dbReference>
<dbReference type="SUPFAM" id="SSF51735">
    <property type="entry name" value="NAD(P)-binding Rossmann-fold domains"/>
    <property type="match status" value="1"/>
</dbReference>
<dbReference type="PROSITE" id="PS51851">
    <property type="entry name" value="KARI_C"/>
    <property type="match status" value="1"/>
</dbReference>
<dbReference type="PROSITE" id="PS51850">
    <property type="entry name" value="KARI_N"/>
    <property type="match status" value="1"/>
</dbReference>
<accession>Q02YY8</accession>
<evidence type="ECO:0000255" key="1">
    <source>
        <dbReference type="HAMAP-Rule" id="MF_00435"/>
    </source>
</evidence>
<evidence type="ECO:0000255" key="2">
    <source>
        <dbReference type="PROSITE-ProRule" id="PRU01197"/>
    </source>
</evidence>
<evidence type="ECO:0000255" key="3">
    <source>
        <dbReference type="PROSITE-ProRule" id="PRU01198"/>
    </source>
</evidence>
<gene>
    <name evidence="1" type="primary">ilvC</name>
    <name type="ordered locus">LACR_1309</name>
</gene>
<feature type="chain" id="PRO_1000050522" description="Ketol-acid reductoisomerase (NADP(+))">
    <location>
        <begin position="1"/>
        <end position="340"/>
    </location>
</feature>
<feature type="domain" description="KARI N-terminal Rossmann" evidence="2">
    <location>
        <begin position="3"/>
        <end position="182"/>
    </location>
</feature>
<feature type="domain" description="KARI C-terminal knotted" evidence="3">
    <location>
        <begin position="183"/>
        <end position="328"/>
    </location>
</feature>
<feature type="active site" evidence="1">
    <location>
        <position position="108"/>
    </location>
</feature>
<feature type="binding site" evidence="1">
    <location>
        <begin position="26"/>
        <end position="29"/>
    </location>
    <ligand>
        <name>NADP(+)</name>
        <dbReference type="ChEBI" id="CHEBI:58349"/>
    </ligand>
</feature>
<feature type="binding site" evidence="1">
    <location>
        <position position="49"/>
    </location>
    <ligand>
        <name>NADP(+)</name>
        <dbReference type="ChEBI" id="CHEBI:58349"/>
    </ligand>
</feature>
<feature type="binding site" evidence="1">
    <location>
        <position position="53"/>
    </location>
    <ligand>
        <name>NADP(+)</name>
        <dbReference type="ChEBI" id="CHEBI:58349"/>
    </ligand>
</feature>
<feature type="binding site" evidence="1">
    <location>
        <begin position="83"/>
        <end position="86"/>
    </location>
    <ligand>
        <name>NADP(+)</name>
        <dbReference type="ChEBI" id="CHEBI:58349"/>
    </ligand>
</feature>
<feature type="binding site" evidence="1">
    <location>
        <position position="134"/>
    </location>
    <ligand>
        <name>NADP(+)</name>
        <dbReference type="ChEBI" id="CHEBI:58349"/>
    </ligand>
</feature>
<feature type="binding site" evidence="1">
    <location>
        <position position="191"/>
    </location>
    <ligand>
        <name>Mg(2+)</name>
        <dbReference type="ChEBI" id="CHEBI:18420"/>
        <label>1</label>
    </ligand>
</feature>
<feature type="binding site" evidence="1">
    <location>
        <position position="191"/>
    </location>
    <ligand>
        <name>Mg(2+)</name>
        <dbReference type="ChEBI" id="CHEBI:18420"/>
        <label>2</label>
    </ligand>
</feature>
<feature type="binding site" evidence="1">
    <location>
        <position position="195"/>
    </location>
    <ligand>
        <name>Mg(2+)</name>
        <dbReference type="ChEBI" id="CHEBI:18420"/>
        <label>1</label>
    </ligand>
</feature>
<feature type="binding site" evidence="1">
    <location>
        <position position="227"/>
    </location>
    <ligand>
        <name>Mg(2+)</name>
        <dbReference type="ChEBI" id="CHEBI:18420"/>
        <label>2</label>
    </ligand>
</feature>
<feature type="binding site" evidence="1">
    <location>
        <position position="231"/>
    </location>
    <ligand>
        <name>Mg(2+)</name>
        <dbReference type="ChEBI" id="CHEBI:18420"/>
        <label>2</label>
    </ligand>
</feature>
<feature type="binding site" evidence="1">
    <location>
        <position position="252"/>
    </location>
    <ligand>
        <name>substrate</name>
    </ligand>
</feature>
<proteinExistence type="inferred from homology"/>
<name>ILVC_LACLS</name>
<organism>
    <name type="scientific">Lactococcus lactis subsp. cremoris (strain SK11)</name>
    <dbReference type="NCBI Taxonomy" id="272622"/>
    <lineage>
        <taxon>Bacteria</taxon>
        <taxon>Bacillati</taxon>
        <taxon>Bacillota</taxon>
        <taxon>Bacilli</taxon>
        <taxon>Lactobacillales</taxon>
        <taxon>Streptococcaceae</taxon>
        <taxon>Lactococcus</taxon>
        <taxon>Lactococcus cremoris subsp. cremoris</taxon>
    </lineage>
</organism>
<keyword id="KW-0028">Amino-acid biosynthesis</keyword>
<keyword id="KW-0100">Branched-chain amino acid biosynthesis</keyword>
<keyword id="KW-0460">Magnesium</keyword>
<keyword id="KW-0479">Metal-binding</keyword>
<keyword id="KW-0521">NADP</keyword>
<keyword id="KW-0560">Oxidoreductase</keyword>
<comment type="function">
    <text evidence="1">Involved in the biosynthesis of branched-chain amino acids (BCAA). Catalyzes an alkyl-migration followed by a ketol-acid reduction of (S)-2-acetolactate (S2AL) to yield (R)-2,3-dihydroxy-isovalerate. In the isomerase reaction, S2AL is rearranged via a Mg-dependent methyl migration to produce 3-hydroxy-3-methyl-2-ketobutyrate (HMKB). In the reductase reaction, this 2-ketoacid undergoes a metal-dependent reduction by NADPH to yield (R)-2,3-dihydroxy-isovalerate.</text>
</comment>
<comment type="catalytic activity">
    <reaction evidence="1">
        <text>(2R)-2,3-dihydroxy-3-methylbutanoate + NADP(+) = (2S)-2-acetolactate + NADPH + H(+)</text>
        <dbReference type="Rhea" id="RHEA:22068"/>
        <dbReference type="ChEBI" id="CHEBI:15378"/>
        <dbReference type="ChEBI" id="CHEBI:49072"/>
        <dbReference type="ChEBI" id="CHEBI:57783"/>
        <dbReference type="ChEBI" id="CHEBI:58349"/>
        <dbReference type="ChEBI" id="CHEBI:58476"/>
        <dbReference type="EC" id="1.1.1.86"/>
    </reaction>
</comment>
<comment type="catalytic activity">
    <reaction evidence="1">
        <text>(2R,3R)-2,3-dihydroxy-3-methylpentanoate + NADP(+) = (S)-2-ethyl-2-hydroxy-3-oxobutanoate + NADPH + H(+)</text>
        <dbReference type="Rhea" id="RHEA:13493"/>
        <dbReference type="ChEBI" id="CHEBI:15378"/>
        <dbReference type="ChEBI" id="CHEBI:49256"/>
        <dbReference type="ChEBI" id="CHEBI:49258"/>
        <dbReference type="ChEBI" id="CHEBI:57783"/>
        <dbReference type="ChEBI" id="CHEBI:58349"/>
        <dbReference type="EC" id="1.1.1.86"/>
    </reaction>
</comment>
<comment type="cofactor">
    <cofactor evidence="1">
        <name>Mg(2+)</name>
        <dbReference type="ChEBI" id="CHEBI:18420"/>
    </cofactor>
    <text evidence="1">Binds 2 magnesium ions per subunit.</text>
</comment>
<comment type="pathway">
    <text evidence="1">Amino-acid biosynthesis; L-isoleucine biosynthesis; L-isoleucine from 2-oxobutanoate: step 2/4.</text>
</comment>
<comment type="pathway">
    <text evidence="1">Amino-acid biosynthesis; L-valine biosynthesis; L-valine from pyruvate: step 2/4.</text>
</comment>
<comment type="similarity">
    <text evidence="1">Belongs to the ketol-acid reductoisomerase family.</text>
</comment>